<evidence type="ECO:0000255" key="1">
    <source>
        <dbReference type="HAMAP-Rule" id="MF_01611"/>
    </source>
</evidence>
<evidence type="ECO:0000255" key="2">
    <source>
        <dbReference type="PROSITE-ProRule" id="PRU01266"/>
    </source>
</evidence>
<reference key="1">
    <citation type="submission" date="2007-03" db="EMBL/GenBank/DDBJ databases">
        <title>Complete sequence of chromosome of Methanococcus maripaludis C5.</title>
        <authorList>
            <consortium name="US DOE Joint Genome Institute"/>
            <person name="Copeland A."/>
            <person name="Lucas S."/>
            <person name="Lapidus A."/>
            <person name="Barry K."/>
            <person name="Glavina del Rio T."/>
            <person name="Dalin E."/>
            <person name="Tice H."/>
            <person name="Pitluck S."/>
            <person name="Chertkov O."/>
            <person name="Brettin T."/>
            <person name="Bruce D."/>
            <person name="Han C."/>
            <person name="Detter J.C."/>
            <person name="Schmutz J."/>
            <person name="Larimer F."/>
            <person name="Land M."/>
            <person name="Hauser L."/>
            <person name="Kyrpides N."/>
            <person name="Mikhailova N."/>
            <person name="Sieprawska-Lupa M."/>
            <person name="Whitman W.B."/>
            <person name="Richardson P."/>
        </authorList>
    </citation>
    <scope>NUCLEOTIDE SEQUENCE [LARGE SCALE GENOMIC DNA]</scope>
    <source>
        <strain>C5 / ATCC BAA-1333</strain>
    </source>
</reference>
<keyword id="KW-0004">4Fe-4S</keyword>
<keyword id="KW-0408">Iron</keyword>
<keyword id="KW-0411">Iron-sulfur</keyword>
<keyword id="KW-0456">Lyase</keyword>
<keyword id="KW-0479">Metal-binding</keyword>
<keyword id="KW-0949">S-adenosyl-L-methionine</keyword>
<sequence>MITKNEALDFLKLNSINSILEKLEGINTQNSSKTITFSKNAFIPVCNWCRNVCGYCTFRNENFKLLKMDEMKEILTKANAFGCREALFTFGENVDENEKVKEELKKMGYYGILEYLYEISAWCLENTNLLPHTNCGILSYDELEYLREVNASMGLMLENSSARLCSTIAHEKSPGKDPNLRIEMIENAGKLKIPFTTGILIGIGETLEERIDSIFEIKRIHEKYGHIQEVIVQNFRSKPLIPMENYKEPSPIEMFKMIILSKLILEGISIQVPPNLNRETGQLFLMAGIDDWGGVSPLTKDFVNPEAPWPDIEELNSFSKELGFELKERLPVYEKYISKEWLDKKVLEKIKK</sequence>
<feature type="chain" id="PRO_1000069448" description="7,8-didemethyl-8-hydroxy-5-deazariboflavin synthase">
    <location>
        <begin position="1"/>
        <end position="352"/>
    </location>
</feature>
<feature type="domain" description="Radical SAM core" evidence="2">
    <location>
        <begin position="35"/>
        <end position="275"/>
    </location>
</feature>
<feature type="binding site" evidence="1">
    <location>
        <position position="49"/>
    </location>
    <ligand>
        <name>[4Fe-4S] cluster</name>
        <dbReference type="ChEBI" id="CHEBI:49883"/>
        <note>4Fe-4S-S-AdoMet</note>
    </ligand>
</feature>
<feature type="binding site" evidence="1">
    <location>
        <position position="53"/>
    </location>
    <ligand>
        <name>[4Fe-4S] cluster</name>
        <dbReference type="ChEBI" id="CHEBI:49883"/>
        <note>4Fe-4S-S-AdoMet</note>
    </ligand>
</feature>
<feature type="binding site" evidence="1">
    <location>
        <position position="56"/>
    </location>
    <ligand>
        <name>[4Fe-4S] cluster</name>
        <dbReference type="ChEBI" id="CHEBI:49883"/>
        <note>4Fe-4S-S-AdoMet</note>
    </ligand>
</feature>
<accession>A4FXR1</accession>
<gene>
    <name evidence="1" type="primary">cofG</name>
    <name type="ordered locus">MmarC5_0684</name>
</gene>
<proteinExistence type="inferred from homology"/>
<comment type="function">
    <text evidence="1">Catalyzes the radical-mediated synthesis of 7,8-didemethyl-8-hydroxy-5-deazariboflavin from 5-amino-5-(4-hydroxybenzyl)-6-(D-ribitylimino)-5,6-dihydrouracil.</text>
</comment>
<comment type="catalytic activity">
    <reaction evidence="1">
        <text>5-amino-5-(4-hydroxybenzyl)-6-(D-ribitylimino)-5,6-dihydrouracil + S-adenosyl-L-methionine = 7,8-didemethyl-8-hydroxy-5-deazariboflavin + 5'-deoxyadenosine + L-methionine + NH4(+) + H(+)</text>
        <dbReference type="Rhea" id="RHEA:55204"/>
        <dbReference type="ChEBI" id="CHEBI:15378"/>
        <dbReference type="ChEBI" id="CHEBI:17319"/>
        <dbReference type="ChEBI" id="CHEBI:28938"/>
        <dbReference type="ChEBI" id="CHEBI:57844"/>
        <dbReference type="ChEBI" id="CHEBI:59789"/>
        <dbReference type="ChEBI" id="CHEBI:59904"/>
        <dbReference type="ChEBI" id="CHEBI:85936"/>
        <dbReference type="EC" id="4.3.1.32"/>
    </reaction>
</comment>
<comment type="cofactor">
    <cofactor evidence="1">
        <name>[4Fe-4S] cluster</name>
        <dbReference type="ChEBI" id="CHEBI:49883"/>
    </cofactor>
    <text evidence="1">Binds 1 [4Fe-4S] cluster. The cluster is coordinated with 3 cysteines and an exchangeable S-adenosyl-L-methionine.</text>
</comment>
<comment type="pathway">
    <text evidence="1">Cofactor biosynthesis; coenzyme F0 biosynthesis.</text>
</comment>
<comment type="subunit">
    <text evidence="1">Consists of two subunits, CofG and CofH.</text>
</comment>
<comment type="similarity">
    <text evidence="1">Belongs to the radical SAM superfamily. CofG family.</text>
</comment>
<organism>
    <name type="scientific">Methanococcus maripaludis (strain C5 / ATCC BAA-1333)</name>
    <dbReference type="NCBI Taxonomy" id="402880"/>
    <lineage>
        <taxon>Archaea</taxon>
        <taxon>Methanobacteriati</taxon>
        <taxon>Methanobacteriota</taxon>
        <taxon>Methanomada group</taxon>
        <taxon>Methanococci</taxon>
        <taxon>Methanococcales</taxon>
        <taxon>Methanococcaceae</taxon>
        <taxon>Methanococcus</taxon>
    </lineage>
</organism>
<name>COFG_METM5</name>
<protein>
    <recommendedName>
        <fullName evidence="1">7,8-didemethyl-8-hydroxy-5-deazariboflavin synthase</fullName>
        <ecNumber evidence="1">4.3.1.32</ecNumber>
    </recommendedName>
    <alternativeName>
        <fullName evidence="1">FO synthase subunit 1</fullName>
    </alternativeName>
</protein>
<dbReference type="EC" id="4.3.1.32" evidence="1"/>
<dbReference type="EMBL" id="CP000609">
    <property type="protein sequence ID" value="ABO34995.1"/>
    <property type="molecule type" value="Genomic_DNA"/>
</dbReference>
<dbReference type="RefSeq" id="WP_011868449.1">
    <property type="nucleotide sequence ID" value="NC_009135.1"/>
</dbReference>
<dbReference type="SMR" id="A4FXR1"/>
<dbReference type="STRING" id="402880.MmarC5_0684"/>
<dbReference type="GeneID" id="4929260"/>
<dbReference type="KEGG" id="mmq:MmarC5_0684"/>
<dbReference type="eggNOG" id="arCOG00657">
    <property type="taxonomic scope" value="Archaea"/>
</dbReference>
<dbReference type="HOGENOM" id="CLU_054174_0_0_2"/>
<dbReference type="OrthoDB" id="35347at2157"/>
<dbReference type="UniPathway" id="UPA00072"/>
<dbReference type="Proteomes" id="UP000000253">
    <property type="component" value="Chromosome"/>
</dbReference>
<dbReference type="GO" id="GO:0051539">
    <property type="term" value="F:4 iron, 4 sulfur cluster binding"/>
    <property type="evidence" value="ECO:0007669"/>
    <property type="project" value="UniProtKB-KW"/>
</dbReference>
<dbReference type="GO" id="GO:0044689">
    <property type="term" value="F:7,8-didemethyl-8-hydroxy-5-deazariboflavin synthase activity"/>
    <property type="evidence" value="ECO:0007669"/>
    <property type="project" value="UniProtKB-EC"/>
</dbReference>
<dbReference type="GO" id="GO:0005506">
    <property type="term" value="F:iron ion binding"/>
    <property type="evidence" value="ECO:0007669"/>
    <property type="project" value="UniProtKB-UniRule"/>
</dbReference>
<dbReference type="GO" id="GO:0016765">
    <property type="term" value="F:transferase activity, transferring alkyl or aryl (other than methyl) groups"/>
    <property type="evidence" value="ECO:0007669"/>
    <property type="project" value="InterPro"/>
</dbReference>
<dbReference type="CDD" id="cd01335">
    <property type="entry name" value="Radical_SAM"/>
    <property type="match status" value="1"/>
</dbReference>
<dbReference type="Gene3D" id="3.20.20.70">
    <property type="entry name" value="Aldolase class I"/>
    <property type="match status" value="1"/>
</dbReference>
<dbReference type="HAMAP" id="MF_01611">
    <property type="entry name" value="FO_synth_sub1"/>
    <property type="match status" value="1"/>
</dbReference>
<dbReference type="InterPro" id="IPR013785">
    <property type="entry name" value="Aldolase_TIM"/>
</dbReference>
<dbReference type="InterPro" id="IPR019939">
    <property type="entry name" value="CofG_family"/>
</dbReference>
<dbReference type="InterPro" id="IPR006638">
    <property type="entry name" value="Elp3/MiaA/NifB-like_rSAM"/>
</dbReference>
<dbReference type="InterPro" id="IPR034405">
    <property type="entry name" value="F420"/>
</dbReference>
<dbReference type="InterPro" id="IPR007197">
    <property type="entry name" value="rSAM"/>
</dbReference>
<dbReference type="NCBIfam" id="TIGR03550">
    <property type="entry name" value="F420_cofG"/>
    <property type="match status" value="1"/>
</dbReference>
<dbReference type="NCBIfam" id="NF004884">
    <property type="entry name" value="PRK06245.1"/>
    <property type="match status" value="1"/>
</dbReference>
<dbReference type="PANTHER" id="PTHR43076:SF15">
    <property type="entry name" value="7,8-DIDEMETHYL-8-HYDROXY-5-DEAZARIBOFLAVIN SYNTHASE"/>
    <property type="match status" value="1"/>
</dbReference>
<dbReference type="PANTHER" id="PTHR43076">
    <property type="entry name" value="FO SYNTHASE (COFH)"/>
    <property type="match status" value="1"/>
</dbReference>
<dbReference type="Pfam" id="PF04055">
    <property type="entry name" value="Radical_SAM"/>
    <property type="match status" value="1"/>
</dbReference>
<dbReference type="SFLD" id="SFLDF00294">
    <property type="entry name" value="7_8-didemethyl-8-hydroxy-5-dea"/>
    <property type="match status" value="1"/>
</dbReference>
<dbReference type="SFLD" id="SFLDG01388">
    <property type="entry name" value="7_8-didemethyl-8-hydroxy-5-dea"/>
    <property type="match status" value="1"/>
</dbReference>
<dbReference type="SMART" id="SM00729">
    <property type="entry name" value="Elp3"/>
    <property type="match status" value="1"/>
</dbReference>
<dbReference type="SUPFAM" id="SSF102114">
    <property type="entry name" value="Radical SAM enzymes"/>
    <property type="match status" value="1"/>
</dbReference>
<dbReference type="PROSITE" id="PS51918">
    <property type="entry name" value="RADICAL_SAM"/>
    <property type="match status" value="1"/>
</dbReference>